<name>QUEF_BURM1</name>
<evidence type="ECO:0000255" key="1">
    <source>
        <dbReference type="HAMAP-Rule" id="MF_00817"/>
    </source>
</evidence>
<feature type="chain" id="PRO_1000134271" description="NADPH-dependent 7-cyano-7-deazaguanine reductase">
    <location>
        <begin position="1"/>
        <end position="274"/>
    </location>
</feature>
<feature type="active site" description="Thioimide intermediate" evidence="1">
    <location>
        <position position="181"/>
    </location>
</feature>
<feature type="active site" description="Proton donor" evidence="1">
    <location>
        <position position="188"/>
    </location>
</feature>
<feature type="binding site" evidence="1">
    <location>
        <begin position="80"/>
        <end position="82"/>
    </location>
    <ligand>
        <name>substrate</name>
    </ligand>
</feature>
<feature type="binding site" evidence="1">
    <location>
        <begin position="82"/>
        <end position="83"/>
    </location>
    <ligand>
        <name>NADPH</name>
        <dbReference type="ChEBI" id="CHEBI:57783"/>
    </ligand>
</feature>
<feature type="binding site" evidence="1">
    <location>
        <begin position="220"/>
        <end position="221"/>
    </location>
    <ligand>
        <name>substrate</name>
    </ligand>
</feature>
<feature type="binding site" evidence="1">
    <location>
        <begin position="249"/>
        <end position="250"/>
    </location>
    <ligand>
        <name>NADPH</name>
        <dbReference type="ChEBI" id="CHEBI:57783"/>
    </ligand>
</feature>
<keyword id="KW-0963">Cytoplasm</keyword>
<keyword id="KW-0521">NADP</keyword>
<keyword id="KW-0560">Oxidoreductase</keyword>
<keyword id="KW-0671">Queuosine biosynthesis</keyword>
<keyword id="KW-1185">Reference proteome</keyword>
<comment type="function">
    <text evidence="1">Catalyzes the NADPH-dependent reduction of 7-cyano-7-deazaguanine (preQ0) to 7-aminomethyl-7-deazaguanine (preQ1).</text>
</comment>
<comment type="catalytic activity">
    <reaction evidence="1">
        <text>7-aminomethyl-7-carbaguanine + 2 NADP(+) = 7-cyano-7-deazaguanine + 2 NADPH + 3 H(+)</text>
        <dbReference type="Rhea" id="RHEA:13409"/>
        <dbReference type="ChEBI" id="CHEBI:15378"/>
        <dbReference type="ChEBI" id="CHEBI:45075"/>
        <dbReference type="ChEBI" id="CHEBI:57783"/>
        <dbReference type="ChEBI" id="CHEBI:58349"/>
        <dbReference type="ChEBI" id="CHEBI:58703"/>
        <dbReference type="EC" id="1.7.1.13"/>
    </reaction>
</comment>
<comment type="pathway">
    <text evidence="1">tRNA modification; tRNA-queuosine biosynthesis.</text>
</comment>
<comment type="subunit">
    <text evidence="1">Homodimer.</text>
</comment>
<comment type="subcellular location">
    <subcellularLocation>
        <location evidence="1">Cytoplasm</location>
    </subcellularLocation>
</comment>
<comment type="similarity">
    <text evidence="1">Belongs to the GTP cyclohydrolase I family. QueF type 2 subfamily.</text>
</comment>
<accession>A9AFB4</accession>
<sequence>MNPEHSPLGKATVYASQYDASLLFPIPRAGAREQIGITSALPFFGTDIWNAYELSWLNARGKPQVAVATFYVPAESPNIVESKSFKLYLGSFAQSKFDSVDAVRDVLKRDVSAACGASVSVQLVSPHDFGKLEMDELDGLSLDRLDLDADVYEPDPSLLSAAEDEAPVEETLVSDLLKSNCPVTGQPDWGSVQIHYVGPQIDHAGLLRYIISFRNHTGFHEQCVERIFLDILHRCKPVKLAVYARYTRRGGLDINPFRTNYNQPMPDNARTARQ</sequence>
<proteinExistence type="inferred from homology"/>
<dbReference type="EC" id="1.7.1.13" evidence="1"/>
<dbReference type="EMBL" id="CP000868">
    <property type="protein sequence ID" value="ABX14256.1"/>
    <property type="molecule type" value="Genomic_DNA"/>
</dbReference>
<dbReference type="EMBL" id="AP009385">
    <property type="protein sequence ID" value="BAG44590.1"/>
    <property type="molecule type" value="Genomic_DNA"/>
</dbReference>
<dbReference type="RefSeq" id="WP_006398294.1">
    <property type="nucleotide sequence ID" value="NC_010804.1"/>
</dbReference>
<dbReference type="SMR" id="A9AFB4"/>
<dbReference type="STRING" id="395019.BMULJ_02700"/>
<dbReference type="KEGG" id="bmj:BMULJ_02700"/>
<dbReference type="KEGG" id="bmu:Bmul_0561"/>
<dbReference type="eggNOG" id="COG0780">
    <property type="taxonomic scope" value="Bacteria"/>
</dbReference>
<dbReference type="eggNOG" id="COG2904">
    <property type="taxonomic scope" value="Bacteria"/>
</dbReference>
<dbReference type="HOGENOM" id="CLU_054738_0_0_4"/>
<dbReference type="UniPathway" id="UPA00392"/>
<dbReference type="Proteomes" id="UP000008815">
    <property type="component" value="Chromosome 1"/>
</dbReference>
<dbReference type="GO" id="GO:0005737">
    <property type="term" value="C:cytoplasm"/>
    <property type="evidence" value="ECO:0007669"/>
    <property type="project" value="UniProtKB-SubCell"/>
</dbReference>
<dbReference type="GO" id="GO:0033739">
    <property type="term" value="F:preQ1 synthase activity"/>
    <property type="evidence" value="ECO:0007669"/>
    <property type="project" value="UniProtKB-UniRule"/>
</dbReference>
<dbReference type="GO" id="GO:0008616">
    <property type="term" value="P:queuosine biosynthetic process"/>
    <property type="evidence" value="ECO:0007669"/>
    <property type="project" value="UniProtKB-UniRule"/>
</dbReference>
<dbReference type="GO" id="GO:0006400">
    <property type="term" value="P:tRNA modification"/>
    <property type="evidence" value="ECO:0007669"/>
    <property type="project" value="UniProtKB-UniRule"/>
</dbReference>
<dbReference type="Gene3D" id="3.30.1130.10">
    <property type="match status" value="2"/>
</dbReference>
<dbReference type="HAMAP" id="MF_00817">
    <property type="entry name" value="QueF_type2"/>
    <property type="match status" value="1"/>
</dbReference>
<dbReference type="InterPro" id="IPR043133">
    <property type="entry name" value="GTP-CH-I_C/QueF"/>
</dbReference>
<dbReference type="InterPro" id="IPR050084">
    <property type="entry name" value="NADPH_dep_7-cyano-7-deazaG_red"/>
</dbReference>
<dbReference type="InterPro" id="IPR029500">
    <property type="entry name" value="QueF"/>
</dbReference>
<dbReference type="InterPro" id="IPR029139">
    <property type="entry name" value="QueF_N"/>
</dbReference>
<dbReference type="InterPro" id="IPR016428">
    <property type="entry name" value="QueF_type2"/>
</dbReference>
<dbReference type="NCBIfam" id="TIGR03138">
    <property type="entry name" value="QueF"/>
    <property type="match status" value="1"/>
</dbReference>
<dbReference type="PANTHER" id="PTHR34354">
    <property type="entry name" value="NADPH-DEPENDENT 7-CYANO-7-DEAZAGUANINE REDUCTASE"/>
    <property type="match status" value="1"/>
</dbReference>
<dbReference type="PANTHER" id="PTHR34354:SF1">
    <property type="entry name" value="NADPH-DEPENDENT 7-CYANO-7-DEAZAGUANINE REDUCTASE"/>
    <property type="match status" value="1"/>
</dbReference>
<dbReference type="Pfam" id="PF14489">
    <property type="entry name" value="QueF"/>
    <property type="match status" value="1"/>
</dbReference>
<dbReference type="Pfam" id="PF14819">
    <property type="entry name" value="QueF_N"/>
    <property type="match status" value="1"/>
</dbReference>
<dbReference type="PIRSF" id="PIRSF004750">
    <property type="entry name" value="Nitrile_oxidored_YqcD_prd"/>
    <property type="match status" value="1"/>
</dbReference>
<dbReference type="SUPFAM" id="SSF55620">
    <property type="entry name" value="Tetrahydrobiopterin biosynthesis enzymes-like"/>
    <property type="match status" value="1"/>
</dbReference>
<protein>
    <recommendedName>
        <fullName evidence="1">NADPH-dependent 7-cyano-7-deazaguanine reductase</fullName>
        <ecNumber evidence="1">1.7.1.13</ecNumber>
    </recommendedName>
    <alternativeName>
        <fullName evidence="1">7-cyano-7-carbaguanine reductase</fullName>
    </alternativeName>
    <alternativeName>
        <fullName evidence="1">NADPH-dependent nitrile oxidoreductase</fullName>
    </alternativeName>
    <alternativeName>
        <fullName evidence="1">PreQ(0) reductase</fullName>
    </alternativeName>
</protein>
<reference key="1">
    <citation type="submission" date="2007-10" db="EMBL/GenBank/DDBJ databases">
        <title>Complete sequence of chromosome 1 of Burkholderia multivorans ATCC 17616.</title>
        <authorList>
            <person name="Copeland A."/>
            <person name="Lucas S."/>
            <person name="Lapidus A."/>
            <person name="Barry K."/>
            <person name="Glavina del Rio T."/>
            <person name="Dalin E."/>
            <person name="Tice H."/>
            <person name="Pitluck S."/>
            <person name="Chain P."/>
            <person name="Malfatti S."/>
            <person name="Shin M."/>
            <person name="Vergez L."/>
            <person name="Schmutz J."/>
            <person name="Larimer F."/>
            <person name="Land M."/>
            <person name="Hauser L."/>
            <person name="Kyrpides N."/>
            <person name="Kim E."/>
            <person name="Tiedje J."/>
            <person name="Richardson P."/>
        </authorList>
    </citation>
    <scope>NUCLEOTIDE SEQUENCE [LARGE SCALE GENOMIC DNA]</scope>
    <source>
        <strain>ATCC 17616 / 249</strain>
    </source>
</reference>
<reference key="2">
    <citation type="submission" date="2007-04" db="EMBL/GenBank/DDBJ databases">
        <title>Complete genome sequence of Burkholderia multivorans ATCC 17616.</title>
        <authorList>
            <person name="Ohtsubo Y."/>
            <person name="Yamashita A."/>
            <person name="Kurokawa K."/>
            <person name="Takami H."/>
            <person name="Yuhara S."/>
            <person name="Nishiyama E."/>
            <person name="Endo R."/>
            <person name="Miyazaki R."/>
            <person name="Ono A."/>
            <person name="Yano K."/>
            <person name="Ito M."/>
            <person name="Sota M."/>
            <person name="Yuji N."/>
            <person name="Hattori M."/>
            <person name="Tsuda M."/>
        </authorList>
    </citation>
    <scope>NUCLEOTIDE SEQUENCE [LARGE SCALE GENOMIC DNA]</scope>
    <source>
        <strain>ATCC 17616 / 249</strain>
    </source>
</reference>
<gene>
    <name evidence="1" type="primary">queF</name>
    <name type="ordered locus">Bmul_0561</name>
    <name type="ordered locus">BMULJ_02700</name>
</gene>
<organism>
    <name type="scientific">Burkholderia multivorans (strain ATCC 17616 / 249)</name>
    <dbReference type="NCBI Taxonomy" id="395019"/>
    <lineage>
        <taxon>Bacteria</taxon>
        <taxon>Pseudomonadati</taxon>
        <taxon>Pseudomonadota</taxon>
        <taxon>Betaproteobacteria</taxon>
        <taxon>Burkholderiales</taxon>
        <taxon>Burkholderiaceae</taxon>
        <taxon>Burkholderia</taxon>
        <taxon>Burkholderia cepacia complex</taxon>
    </lineage>
</organism>